<name>SPED_BREBN</name>
<feature type="chain" id="PRO_1000193158" description="S-adenosylmethionine decarboxylase beta chain" evidence="1">
    <location>
        <begin position="1"/>
        <end position="117"/>
    </location>
</feature>
<feature type="chain" id="PRO_1000193159" description="S-adenosylmethionine decarboxylase alpha chain" evidence="1">
    <location>
        <begin position="118"/>
        <end position="269"/>
    </location>
</feature>
<feature type="active site" description="Schiff-base intermediate with substrate; via pyruvic acid" evidence="1">
    <location>
        <position position="118"/>
    </location>
</feature>
<feature type="active site" description="Proton acceptor; for processing activity" evidence="1">
    <location>
        <position position="123"/>
    </location>
</feature>
<feature type="active site" description="Proton donor; for catalytic activity" evidence="1">
    <location>
        <position position="146"/>
    </location>
</feature>
<feature type="site" description="Cleavage (non-hydrolytic); by autolysis" evidence="1">
    <location>
        <begin position="117"/>
        <end position="118"/>
    </location>
</feature>
<feature type="modified residue" description="Pyruvic acid (Ser); by autocatalysis" evidence="1">
    <location>
        <position position="118"/>
    </location>
</feature>
<gene>
    <name evidence="1" type="primary">speD</name>
    <name type="ordered locus">BBR47_08050</name>
</gene>
<organism>
    <name type="scientific">Brevibacillus brevis (strain 47 / JCM 6285 / NBRC 100599)</name>
    <dbReference type="NCBI Taxonomy" id="358681"/>
    <lineage>
        <taxon>Bacteria</taxon>
        <taxon>Bacillati</taxon>
        <taxon>Bacillota</taxon>
        <taxon>Bacilli</taxon>
        <taxon>Bacillales</taxon>
        <taxon>Paenibacillaceae</taxon>
        <taxon>Brevibacillus</taxon>
    </lineage>
</organism>
<reference key="1">
    <citation type="submission" date="2005-03" db="EMBL/GenBank/DDBJ databases">
        <title>Brevibacillus brevis strain 47, complete genome.</title>
        <authorList>
            <person name="Hosoyama A."/>
            <person name="Yamada R."/>
            <person name="Hongo Y."/>
            <person name="Terui Y."/>
            <person name="Ankai A."/>
            <person name="Masuyama W."/>
            <person name="Sekiguchi M."/>
            <person name="Takeda T."/>
            <person name="Asano K."/>
            <person name="Ohji S."/>
            <person name="Ichikawa N."/>
            <person name="Narita S."/>
            <person name="Aoki N."/>
            <person name="Miura H."/>
            <person name="Matsushita S."/>
            <person name="Sekigawa T."/>
            <person name="Yamagata H."/>
            <person name="Yoshikawa H."/>
            <person name="Udaka S."/>
            <person name="Tanikawa S."/>
            <person name="Fujita N."/>
        </authorList>
    </citation>
    <scope>NUCLEOTIDE SEQUENCE [LARGE SCALE GENOMIC DNA]</scope>
    <source>
        <strain>47 / JCM 6285 / NBRC 100599</strain>
    </source>
</reference>
<protein>
    <recommendedName>
        <fullName evidence="1">S-adenosylmethionine decarboxylase proenzyme</fullName>
        <shortName evidence="1">AdoMetDC</shortName>
        <shortName evidence="1">SAMDC</shortName>
        <ecNumber evidence="1">4.1.1.50</ecNumber>
    </recommendedName>
    <component>
        <recommendedName>
            <fullName evidence="1">S-adenosylmethionine decarboxylase beta chain</fullName>
        </recommendedName>
    </component>
    <component>
        <recommendedName>
            <fullName evidence="1">S-adenosylmethionine decarboxylase alpha chain</fullName>
        </recommendedName>
    </component>
</protein>
<dbReference type="EC" id="4.1.1.50" evidence="1"/>
<dbReference type="EMBL" id="AP008955">
    <property type="protein sequence ID" value="BAH41782.1"/>
    <property type="molecule type" value="Genomic_DNA"/>
</dbReference>
<dbReference type="RefSeq" id="WP_012684545.1">
    <property type="nucleotide sequence ID" value="NC_012491.1"/>
</dbReference>
<dbReference type="SMR" id="C0Z4Q5"/>
<dbReference type="STRING" id="358681.BBR47_08050"/>
<dbReference type="KEGG" id="bbe:BBR47_08050"/>
<dbReference type="eggNOG" id="COG1586">
    <property type="taxonomic scope" value="Bacteria"/>
</dbReference>
<dbReference type="HOGENOM" id="CLU_092007_0_0_9"/>
<dbReference type="UniPathway" id="UPA00331">
    <property type="reaction ID" value="UER00451"/>
</dbReference>
<dbReference type="Proteomes" id="UP000001877">
    <property type="component" value="Chromosome"/>
</dbReference>
<dbReference type="GO" id="GO:0005829">
    <property type="term" value="C:cytosol"/>
    <property type="evidence" value="ECO:0007669"/>
    <property type="project" value="TreeGrafter"/>
</dbReference>
<dbReference type="GO" id="GO:0004014">
    <property type="term" value="F:adenosylmethionine decarboxylase activity"/>
    <property type="evidence" value="ECO:0007669"/>
    <property type="project" value="UniProtKB-UniRule"/>
</dbReference>
<dbReference type="GO" id="GO:0008295">
    <property type="term" value="P:spermidine biosynthetic process"/>
    <property type="evidence" value="ECO:0007669"/>
    <property type="project" value="UniProtKB-UniRule"/>
</dbReference>
<dbReference type="Gene3D" id="3.60.90.10">
    <property type="entry name" value="S-adenosylmethionine decarboxylase"/>
    <property type="match status" value="1"/>
</dbReference>
<dbReference type="HAMAP" id="MF_00465">
    <property type="entry name" value="AdoMetDC_2"/>
    <property type="match status" value="1"/>
</dbReference>
<dbReference type="InterPro" id="IPR003826">
    <property type="entry name" value="AdoMetDC_fam_prok"/>
</dbReference>
<dbReference type="InterPro" id="IPR009165">
    <property type="entry name" value="S-AdoMet_deCO2ase_bac"/>
</dbReference>
<dbReference type="InterPro" id="IPR016067">
    <property type="entry name" value="S-AdoMet_deCO2ase_core"/>
</dbReference>
<dbReference type="NCBIfam" id="TIGR03331">
    <property type="entry name" value="SAM_DCase_Eco"/>
    <property type="match status" value="1"/>
</dbReference>
<dbReference type="PANTHER" id="PTHR33866">
    <property type="entry name" value="S-ADENOSYLMETHIONINE DECARBOXYLASE PROENZYME"/>
    <property type="match status" value="1"/>
</dbReference>
<dbReference type="PANTHER" id="PTHR33866:SF1">
    <property type="entry name" value="S-ADENOSYLMETHIONINE DECARBOXYLASE PROENZYME"/>
    <property type="match status" value="1"/>
</dbReference>
<dbReference type="Pfam" id="PF02675">
    <property type="entry name" value="AdoMet_dc"/>
    <property type="match status" value="1"/>
</dbReference>
<dbReference type="PIRSF" id="PIRSF001356">
    <property type="entry name" value="SAM_decarboxylas"/>
    <property type="match status" value="1"/>
</dbReference>
<dbReference type="SUPFAM" id="SSF56276">
    <property type="entry name" value="S-adenosylmethionine decarboxylase"/>
    <property type="match status" value="1"/>
</dbReference>
<accession>C0Z4Q5</accession>
<evidence type="ECO:0000255" key="1">
    <source>
        <dbReference type="HAMAP-Rule" id="MF_00465"/>
    </source>
</evidence>
<proteinExistence type="inferred from homology"/>
<sequence>MEQKTEHNVTLHGFNNLTKSLSFNMYDICYTKTKEEREAYIEYIDEQYNAERLTSILKNVSDIIGAHVLNVAKQDYVPQGASVTFLVSEGPVVEVPTESYEESPGPLPENVVLQLDKSHITVHTYPEYHPTEGISTFRADIDVSTCGEISPLKALNYLIRSFDTDLMTIDYKVRGFTRDIHGYKLFIDHDISSIQNYIPEEIKELFHMIDVNVYQDNIFHTKCKRREFDLNNYLFGYTKDRLTPEEQEDITKQLQIEMDEIYYGKNFVN</sequence>
<keyword id="KW-0068">Autocatalytic cleavage</keyword>
<keyword id="KW-0210">Decarboxylase</keyword>
<keyword id="KW-0456">Lyase</keyword>
<keyword id="KW-0620">Polyamine biosynthesis</keyword>
<keyword id="KW-0670">Pyruvate</keyword>
<keyword id="KW-1185">Reference proteome</keyword>
<keyword id="KW-0949">S-adenosyl-L-methionine</keyword>
<keyword id="KW-0704">Schiff base</keyword>
<keyword id="KW-0745">Spermidine biosynthesis</keyword>
<keyword id="KW-0865">Zymogen</keyword>
<comment type="function">
    <text evidence="1">Catalyzes the decarboxylation of S-adenosylmethionine to S-adenosylmethioninamine (dcAdoMet), the propylamine donor required for the synthesis of the polyamines spermine and spermidine from the diamine putrescine.</text>
</comment>
<comment type="catalytic activity">
    <reaction evidence="1">
        <text>S-adenosyl-L-methionine + H(+) = S-adenosyl 3-(methylsulfanyl)propylamine + CO2</text>
        <dbReference type="Rhea" id="RHEA:15981"/>
        <dbReference type="ChEBI" id="CHEBI:15378"/>
        <dbReference type="ChEBI" id="CHEBI:16526"/>
        <dbReference type="ChEBI" id="CHEBI:57443"/>
        <dbReference type="ChEBI" id="CHEBI:59789"/>
        <dbReference type="EC" id="4.1.1.50"/>
    </reaction>
</comment>
<comment type="cofactor">
    <cofactor evidence="1">
        <name>pyruvate</name>
        <dbReference type="ChEBI" id="CHEBI:15361"/>
    </cofactor>
    <text evidence="1">Binds 1 pyruvoyl group covalently per subunit.</text>
</comment>
<comment type="pathway">
    <text evidence="1">Amine and polyamine biosynthesis; S-adenosylmethioninamine biosynthesis; S-adenosylmethioninamine from S-adenosyl-L-methionine: step 1/1.</text>
</comment>
<comment type="subunit">
    <text evidence="1">Heterooctamer of four alpha and four beta chains arranged as a tetramer of alpha/beta heterodimers.</text>
</comment>
<comment type="PTM">
    <text evidence="1">Is synthesized initially as an inactive proenzyme. Formation of the active enzyme involves a self-maturation process in which the active site pyruvoyl group is generated from an internal serine residue via an autocatalytic post-translational modification. Two non-identical subunits are generated from the proenzyme in this reaction, and the pyruvate is formed at the N-terminus of the alpha chain, which is derived from the carboxyl end of the proenzyme. The post-translation cleavage follows an unusual pathway, termed non-hydrolytic serinolysis, in which the side chain hydroxyl group of the serine supplies its oxygen atom to form the C-terminus of the beta chain, while the remainder of the serine residue undergoes an oxidative deamination to produce ammonia and the pyruvoyl group blocking the N-terminus of the alpha chain.</text>
</comment>
<comment type="similarity">
    <text evidence="1">Belongs to the prokaryotic AdoMetDC family. Type 2 subfamily.</text>
</comment>